<dbReference type="EC" id="2.7.7.8" evidence="1"/>
<dbReference type="EMBL" id="AP009153">
    <property type="protein sequence ID" value="BAH38806.1"/>
    <property type="molecule type" value="Genomic_DNA"/>
</dbReference>
<dbReference type="RefSeq" id="WP_012683253.1">
    <property type="nucleotide sequence ID" value="NC_012489.1"/>
</dbReference>
<dbReference type="SMR" id="C1A3Y1"/>
<dbReference type="STRING" id="379066.GAU_1764"/>
<dbReference type="KEGG" id="gau:GAU_1764"/>
<dbReference type="eggNOG" id="COG1185">
    <property type="taxonomic scope" value="Bacteria"/>
</dbReference>
<dbReference type="HOGENOM" id="CLU_004217_2_2_0"/>
<dbReference type="OrthoDB" id="9804305at2"/>
<dbReference type="Proteomes" id="UP000002209">
    <property type="component" value="Chromosome"/>
</dbReference>
<dbReference type="GO" id="GO:0005829">
    <property type="term" value="C:cytosol"/>
    <property type="evidence" value="ECO:0007669"/>
    <property type="project" value="TreeGrafter"/>
</dbReference>
<dbReference type="GO" id="GO:0000175">
    <property type="term" value="F:3'-5'-RNA exonuclease activity"/>
    <property type="evidence" value="ECO:0007669"/>
    <property type="project" value="TreeGrafter"/>
</dbReference>
<dbReference type="GO" id="GO:0000287">
    <property type="term" value="F:magnesium ion binding"/>
    <property type="evidence" value="ECO:0007669"/>
    <property type="project" value="UniProtKB-UniRule"/>
</dbReference>
<dbReference type="GO" id="GO:0004654">
    <property type="term" value="F:polyribonucleotide nucleotidyltransferase activity"/>
    <property type="evidence" value="ECO:0007669"/>
    <property type="project" value="UniProtKB-UniRule"/>
</dbReference>
<dbReference type="GO" id="GO:0003723">
    <property type="term" value="F:RNA binding"/>
    <property type="evidence" value="ECO:0007669"/>
    <property type="project" value="UniProtKB-UniRule"/>
</dbReference>
<dbReference type="GO" id="GO:0006402">
    <property type="term" value="P:mRNA catabolic process"/>
    <property type="evidence" value="ECO:0007669"/>
    <property type="project" value="UniProtKB-UniRule"/>
</dbReference>
<dbReference type="GO" id="GO:0006396">
    <property type="term" value="P:RNA processing"/>
    <property type="evidence" value="ECO:0007669"/>
    <property type="project" value="InterPro"/>
</dbReference>
<dbReference type="CDD" id="cd02393">
    <property type="entry name" value="KH-I_PNPase"/>
    <property type="match status" value="1"/>
</dbReference>
<dbReference type="CDD" id="cd11363">
    <property type="entry name" value="RNase_PH_PNPase_1"/>
    <property type="match status" value="1"/>
</dbReference>
<dbReference type="CDD" id="cd11364">
    <property type="entry name" value="RNase_PH_PNPase_2"/>
    <property type="match status" value="1"/>
</dbReference>
<dbReference type="CDD" id="cd04472">
    <property type="entry name" value="S1_PNPase"/>
    <property type="match status" value="1"/>
</dbReference>
<dbReference type="FunFam" id="3.30.1370.10:FF:000001">
    <property type="entry name" value="Polyribonucleotide nucleotidyltransferase"/>
    <property type="match status" value="1"/>
</dbReference>
<dbReference type="FunFam" id="3.30.230.70:FF:000001">
    <property type="entry name" value="Polyribonucleotide nucleotidyltransferase"/>
    <property type="match status" value="1"/>
</dbReference>
<dbReference type="FunFam" id="3.30.230.70:FF:000002">
    <property type="entry name" value="Polyribonucleotide nucleotidyltransferase"/>
    <property type="match status" value="1"/>
</dbReference>
<dbReference type="Gene3D" id="3.30.230.70">
    <property type="entry name" value="GHMP Kinase, N-terminal domain"/>
    <property type="match status" value="2"/>
</dbReference>
<dbReference type="Gene3D" id="3.30.1370.10">
    <property type="entry name" value="K Homology domain, type 1"/>
    <property type="match status" value="1"/>
</dbReference>
<dbReference type="Gene3D" id="2.40.50.140">
    <property type="entry name" value="Nucleic acid-binding proteins"/>
    <property type="match status" value="1"/>
</dbReference>
<dbReference type="HAMAP" id="MF_01595">
    <property type="entry name" value="PNPase"/>
    <property type="match status" value="1"/>
</dbReference>
<dbReference type="InterPro" id="IPR001247">
    <property type="entry name" value="ExoRNase_PH_dom1"/>
</dbReference>
<dbReference type="InterPro" id="IPR015847">
    <property type="entry name" value="ExoRNase_PH_dom2"/>
</dbReference>
<dbReference type="InterPro" id="IPR036345">
    <property type="entry name" value="ExoRNase_PH_dom2_sf"/>
</dbReference>
<dbReference type="InterPro" id="IPR004087">
    <property type="entry name" value="KH_dom"/>
</dbReference>
<dbReference type="InterPro" id="IPR004088">
    <property type="entry name" value="KH_dom_type_1"/>
</dbReference>
<dbReference type="InterPro" id="IPR036612">
    <property type="entry name" value="KH_dom_type_1_sf"/>
</dbReference>
<dbReference type="InterPro" id="IPR012340">
    <property type="entry name" value="NA-bd_OB-fold"/>
</dbReference>
<dbReference type="InterPro" id="IPR012162">
    <property type="entry name" value="PNPase"/>
</dbReference>
<dbReference type="InterPro" id="IPR027408">
    <property type="entry name" value="PNPase/RNase_PH_dom_sf"/>
</dbReference>
<dbReference type="InterPro" id="IPR015848">
    <property type="entry name" value="PNPase_PH_RNA-bd_bac/org-type"/>
</dbReference>
<dbReference type="InterPro" id="IPR036456">
    <property type="entry name" value="PNPase_PH_RNA-bd_sf"/>
</dbReference>
<dbReference type="InterPro" id="IPR020568">
    <property type="entry name" value="Ribosomal_Su5_D2-typ_SF"/>
</dbReference>
<dbReference type="InterPro" id="IPR003029">
    <property type="entry name" value="S1_domain"/>
</dbReference>
<dbReference type="NCBIfam" id="TIGR03591">
    <property type="entry name" value="polynuc_phos"/>
    <property type="match status" value="1"/>
</dbReference>
<dbReference type="NCBIfam" id="NF008805">
    <property type="entry name" value="PRK11824.1"/>
    <property type="match status" value="1"/>
</dbReference>
<dbReference type="PANTHER" id="PTHR11252">
    <property type="entry name" value="POLYRIBONUCLEOTIDE NUCLEOTIDYLTRANSFERASE"/>
    <property type="match status" value="1"/>
</dbReference>
<dbReference type="PANTHER" id="PTHR11252:SF0">
    <property type="entry name" value="POLYRIBONUCLEOTIDE NUCLEOTIDYLTRANSFERASE 1, MITOCHONDRIAL"/>
    <property type="match status" value="1"/>
</dbReference>
<dbReference type="Pfam" id="PF00013">
    <property type="entry name" value="KH_1"/>
    <property type="match status" value="1"/>
</dbReference>
<dbReference type="Pfam" id="PF03726">
    <property type="entry name" value="PNPase"/>
    <property type="match status" value="1"/>
</dbReference>
<dbReference type="Pfam" id="PF01138">
    <property type="entry name" value="RNase_PH"/>
    <property type="match status" value="2"/>
</dbReference>
<dbReference type="Pfam" id="PF03725">
    <property type="entry name" value="RNase_PH_C"/>
    <property type="match status" value="2"/>
</dbReference>
<dbReference type="Pfam" id="PF00575">
    <property type="entry name" value="S1"/>
    <property type="match status" value="1"/>
</dbReference>
<dbReference type="PIRSF" id="PIRSF005499">
    <property type="entry name" value="PNPase"/>
    <property type="match status" value="1"/>
</dbReference>
<dbReference type="SMART" id="SM00322">
    <property type="entry name" value="KH"/>
    <property type="match status" value="1"/>
</dbReference>
<dbReference type="SMART" id="SM00316">
    <property type="entry name" value="S1"/>
    <property type="match status" value="1"/>
</dbReference>
<dbReference type="SUPFAM" id="SSF54791">
    <property type="entry name" value="Eukaryotic type KH-domain (KH-domain type I)"/>
    <property type="match status" value="1"/>
</dbReference>
<dbReference type="SUPFAM" id="SSF50249">
    <property type="entry name" value="Nucleic acid-binding proteins"/>
    <property type="match status" value="1"/>
</dbReference>
<dbReference type="SUPFAM" id="SSF46915">
    <property type="entry name" value="Polynucleotide phosphorylase/guanosine pentaphosphate synthase (PNPase/GPSI), domain 3"/>
    <property type="match status" value="1"/>
</dbReference>
<dbReference type="SUPFAM" id="SSF55666">
    <property type="entry name" value="Ribonuclease PH domain 2-like"/>
    <property type="match status" value="2"/>
</dbReference>
<dbReference type="SUPFAM" id="SSF54211">
    <property type="entry name" value="Ribosomal protein S5 domain 2-like"/>
    <property type="match status" value="2"/>
</dbReference>
<dbReference type="PROSITE" id="PS50084">
    <property type="entry name" value="KH_TYPE_1"/>
    <property type="match status" value="1"/>
</dbReference>
<dbReference type="PROSITE" id="PS50126">
    <property type="entry name" value="S1"/>
    <property type="match status" value="1"/>
</dbReference>
<sequence>MHRIERTFAGRPLVIETGRMAKQAAGSAVVQFGETMVLAAVTVSENQSPLPFFPLTVEYKEKTYAAGKIPGGFIKREGRPHDHEILAARIIDRSIRPLFPEGFKNEVQVFIYVISADQENDADVLALVAASFALNASKIPFLGPIAGVRVGRVQGHWVLNPTFQQLGFSDLELVVAGSKDSIVMVEGGSLEVSEEDVLESLRLSHDGIRELIGMQEELLAKVRVPKMSWVKAEAPEGITTRVKELASGRIREALNQKDKHTRIEAVERTKKELAEGLLVEFPDNAKDIGNLLGDVEYHELRSQVLDTQLRVDGRKKDEVRAISIDTSVLPRAHGSALFTRGQTQALVAATLGTAKDAQRLDSIKEPGEVTRSFMLHYNFPPFSTGEVRPMRGTSRREIGHGNLAERALQGVLPDFADFPYTIRIVSDVLESNGSSSMASVCGGSLSLFDAGVPLKAAVAGVAMGLIKEGERYAILTDILGTEDHLGDMDFKVAGTKDGITSIQMDIKIEGLDIKIMEEALSQAKAGRLHILGEMDKALAAPREDLSKYAPRIVTVQIPVDKIGELIGPKGKNIRGIQDETGAELSVEDDGTVTIAAVGGDSMERAKQMVMAITAEPVVGETYEGTVKTVTAFGAFVEIMPGNEALLHVSEMRWERVEKPEDVVKKGDRVTVKLVDRDERGRLRLSMKALLPKPEGMPDEPPQSERPRRDDGERSGGDRGGRGGRNGGGRDRR</sequence>
<gene>
    <name evidence="1" type="primary">pnp</name>
    <name type="ordered locus">GAU_1764</name>
</gene>
<comment type="function">
    <text evidence="1">Involved in mRNA degradation. Catalyzes the phosphorolysis of single-stranded polyribonucleotides processively in the 3'- to 5'-direction.</text>
</comment>
<comment type="catalytic activity">
    <reaction evidence="1">
        <text>RNA(n+1) + phosphate = RNA(n) + a ribonucleoside 5'-diphosphate</text>
        <dbReference type="Rhea" id="RHEA:22096"/>
        <dbReference type="Rhea" id="RHEA-COMP:14527"/>
        <dbReference type="Rhea" id="RHEA-COMP:17342"/>
        <dbReference type="ChEBI" id="CHEBI:43474"/>
        <dbReference type="ChEBI" id="CHEBI:57930"/>
        <dbReference type="ChEBI" id="CHEBI:140395"/>
        <dbReference type="EC" id="2.7.7.8"/>
    </reaction>
</comment>
<comment type="cofactor">
    <cofactor evidence="1">
        <name>Mg(2+)</name>
        <dbReference type="ChEBI" id="CHEBI:18420"/>
    </cofactor>
</comment>
<comment type="subcellular location">
    <subcellularLocation>
        <location evidence="1">Cytoplasm</location>
    </subcellularLocation>
</comment>
<comment type="similarity">
    <text evidence="1">Belongs to the polyribonucleotide nucleotidyltransferase family.</text>
</comment>
<keyword id="KW-0963">Cytoplasm</keyword>
<keyword id="KW-0460">Magnesium</keyword>
<keyword id="KW-0479">Metal-binding</keyword>
<keyword id="KW-0548">Nucleotidyltransferase</keyword>
<keyword id="KW-1185">Reference proteome</keyword>
<keyword id="KW-0694">RNA-binding</keyword>
<keyword id="KW-0808">Transferase</keyword>
<reference key="1">
    <citation type="submission" date="2006-03" db="EMBL/GenBank/DDBJ databases">
        <title>Complete genome sequence of Gemmatimonas aurantiaca T-27 that represents a novel phylum Gemmatimonadetes.</title>
        <authorList>
            <person name="Takasaki K."/>
            <person name="Ichikawa N."/>
            <person name="Miura H."/>
            <person name="Matsushita S."/>
            <person name="Watanabe Y."/>
            <person name="Oguchi A."/>
            <person name="Ankai A."/>
            <person name="Yashiro I."/>
            <person name="Takahashi M."/>
            <person name="Terui Y."/>
            <person name="Fukui S."/>
            <person name="Yokoyama H."/>
            <person name="Tanikawa S."/>
            <person name="Hanada S."/>
            <person name="Kamagata Y."/>
            <person name="Fujita N."/>
        </authorList>
    </citation>
    <scope>NUCLEOTIDE SEQUENCE [LARGE SCALE GENOMIC DNA]</scope>
    <source>
        <strain>DSM 14586 / JCM 11422 / NBRC 100505 / T-27</strain>
    </source>
</reference>
<protein>
    <recommendedName>
        <fullName evidence="1">Polyribonucleotide nucleotidyltransferase</fullName>
        <ecNumber evidence="1">2.7.7.8</ecNumber>
    </recommendedName>
    <alternativeName>
        <fullName evidence="1">Polynucleotide phosphorylase</fullName>
        <shortName evidence="1">PNPase</shortName>
    </alternativeName>
</protein>
<name>PNP_GEMAT</name>
<feature type="chain" id="PRO_0000381897" description="Polyribonucleotide nucleotidyltransferase">
    <location>
        <begin position="1"/>
        <end position="732"/>
    </location>
</feature>
<feature type="domain" description="KH" evidence="1">
    <location>
        <begin position="550"/>
        <end position="609"/>
    </location>
</feature>
<feature type="domain" description="S1 motif" evidence="1">
    <location>
        <begin position="619"/>
        <end position="687"/>
    </location>
</feature>
<feature type="region of interest" description="Disordered" evidence="2">
    <location>
        <begin position="684"/>
        <end position="732"/>
    </location>
</feature>
<feature type="compositionally biased region" description="Basic and acidic residues" evidence="2">
    <location>
        <begin position="702"/>
        <end position="720"/>
    </location>
</feature>
<feature type="binding site" evidence="1">
    <location>
        <position position="483"/>
    </location>
    <ligand>
        <name>Mg(2+)</name>
        <dbReference type="ChEBI" id="CHEBI:18420"/>
    </ligand>
</feature>
<feature type="binding site" evidence="1">
    <location>
        <position position="489"/>
    </location>
    <ligand>
        <name>Mg(2+)</name>
        <dbReference type="ChEBI" id="CHEBI:18420"/>
    </ligand>
</feature>
<proteinExistence type="inferred from homology"/>
<organism>
    <name type="scientific">Gemmatimonas aurantiaca (strain DSM 14586 / JCM 11422 / NBRC 100505 / T-27)</name>
    <dbReference type="NCBI Taxonomy" id="379066"/>
    <lineage>
        <taxon>Bacteria</taxon>
        <taxon>Pseudomonadati</taxon>
        <taxon>Gemmatimonadota</taxon>
        <taxon>Gemmatimonadia</taxon>
        <taxon>Gemmatimonadales</taxon>
        <taxon>Gemmatimonadaceae</taxon>
        <taxon>Gemmatimonas</taxon>
    </lineage>
</organism>
<evidence type="ECO:0000255" key="1">
    <source>
        <dbReference type="HAMAP-Rule" id="MF_01595"/>
    </source>
</evidence>
<evidence type="ECO:0000256" key="2">
    <source>
        <dbReference type="SAM" id="MobiDB-lite"/>
    </source>
</evidence>
<accession>C1A3Y1</accession>